<protein>
    <recommendedName>
        <fullName>Lysine-specific demethylase 4D</fullName>
        <ecNumber evidence="3">1.14.11.66</ecNumber>
    </recommendedName>
    <alternativeName>
        <fullName>JmjC domain-containing histone demethylation protein 3D</fullName>
    </alternativeName>
    <alternativeName>
        <fullName>Jumonji domain-containing protein 2D</fullName>
    </alternativeName>
    <alternativeName>
        <fullName evidence="7">[histone H3]-trimethyl-L-lysine(9) demethylase 4D</fullName>
    </alternativeName>
</protein>
<gene>
    <name type="primary">Kdm4d</name>
    <name type="synonym">Jhdm3d</name>
    <name type="synonym">Jmjd2d</name>
</gene>
<dbReference type="EC" id="1.14.11.66" evidence="3"/>
<dbReference type="EMBL" id="BC128760">
    <property type="protein sequence ID" value="AAI28761.1"/>
    <property type="molecule type" value="mRNA"/>
</dbReference>
<dbReference type="RefSeq" id="NP_001073180.1">
    <property type="nucleotide sequence ID" value="NM_001079712.1"/>
</dbReference>
<dbReference type="RefSeq" id="XP_017451454.1">
    <property type="nucleotide sequence ID" value="XM_017595965.1"/>
</dbReference>
<dbReference type="RefSeq" id="XP_017459055.1">
    <property type="nucleotide sequence ID" value="XM_017603566.1"/>
</dbReference>
<dbReference type="SMR" id="A1A5Q5"/>
<dbReference type="FunCoup" id="A1A5Q5">
    <property type="interactions" value="53"/>
</dbReference>
<dbReference type="STRING" id="10116.ENSRNOP00000059913"/>
<dbReference type="PhosphoSitePlus" id="A1A5Q5"/>
<dbReference type="PaxDb" id="10116-ENSRNOP00000059913"/>
<dbReference type="Ensembl" id="ENSRNOT00000033932.6">
    <property type="protein sequence ID" value="ENSRNOP00000059913.1"/>
    <property type="gene ID" value="ENSRNOG00000045905.2"/>
</dbReference>
<dbReference type="Ensembl" id="ENSRNOT00000071532.2">
    <property type="protein sequence ID" value="ENSRNOP00000067344.1"/>
    <property type="gene ID" value="ENSRNOG00000045905.2"/>
</dbReference>
<dbReference type="GeneID" id="689582"/>
<dbReference type="KEGG" id="rno:689582"/>
<dbReference type="UCSC" id="RGD:1591045">
    <property type="organism name" value="rat"/>
</dbReference>
<dbReference type="AGR" id="RGD:1591045"/>
<dbReference type="CTD" id="55693"/>
<dbReference type="RGD" id="1591045">
    <property type="gene designation" value="Kdm4d"/>
</dbReference>
<dbReference type="eggNOG" id="KOG0958">
    <property type="taxonomic scope" value="Eukaryota"/>
</dbReference>
<dbReference type="GeneTree" id="ENSGT00940000162152"/>
<dbReference type="HOGENOM" id="CLU_001442_6_1_1"/>
<dbReference type="InParanoid" id="A1A5Q5"/>
<dbReference type="OMA" id="RASICKC"/>
<dbReference type="OrthoDB" id="9547406at2759"/>
<dbReference type="PhylomeDB" id="A1A5Q5"/>
<dbReference type="TreeFam" id="TF106449"/>
<dbReference type="Reactome" id="R-RNO-3214842">
    <property type="pathway name" value="HDMs demethylate histones"/>
</dbReference>
<dbReference type="PRO" id="PR:A1A5Q5"/>
<dbReference type="Proteomes" id="UP000002494">
    <property type="component" value="Chromosome 8"/>
</dbReference>
<dbReference type="Bgee" id="ENSRNOG00000024726">
    <property type="expression patterns" value="Expressed in testis and 2 other cell types or tissues"/>
</dbReference>
<dbReference type="GO" id="GO:0000785">
    <property type="term" value="C:chromatin"/>
    <property type="evidence" value="ECO:0000318"/>
    <property type="project" value="GO_Central"/>
</dbReference>
<dbReference type="GO" id="GO:0005634">
    <property type="term" value="C:nucleus"/>
    <property type="evidence" value="ECO:0000266"/>
    <property type="project" value="RGD"/>
</dbReference>
<dbReference type="GO" id="GO:0005721">
    <property type="term" value="C:pericentric heterochromatin"/>
    <property type="evidence" value="ECO:0000266"/>
    <property type="project" value="RGD"/>
</dbReference>
<dbReference type="GO" id="GO:0035861">
    <property type="term" value="C:site of double-strand break"/>
    <property type="evidence" value="ECO:0000266"/>
    <property type="project" value="RGD"/>
</dbReference>
<dbReference type="GO" id="GO:0031490">
    <property type="term" value="F:chromatin DNA binding"/>
    <property type="evidence" value="ECO:0000266"/>
    <property type="project" value="RGD"/>
</dbReference>
<dbReference type="GO" id="GO:0003684">
    <property type="term" value="F:damaged DNA binding"/>
    <property type="evidence" value="ECO:0000266"/>
    <property type="project" value="RGD"/>
</dbReference>
<dbReference type="GO" id="GO:0032452">
    <property type="term" value="F:histone demethylase activity"/>
    <property type="evidence" value="ECO:0000266"/>
    <property type="project" value="RGD"/>
</dbReference>
<dbReference type="GO" id="GO:0032454">
    <property type="term" value="F:histone H3K9 demethylase activity"/>
    <property type="evidence" value="ECO:0000266"/>
    <property type="project" value="RGD"/>
</dbReference>
<dbReference type="GO" id="GO:0140684">
    <property type="term" value="F:histone H3K9me2/H3K9me3 demethylase activity"/>
    <property type="evidence" value="ECO:0000266"/>
    <property type="project" value="RGD"/>
</dbReference>
<dbReference type="GO" id="GO:0046872">
    <property type="term" value="F:metal ion binding"/>
    <property type="evidence" value="ECO:0007669"/>
    <property type="project" value="UniProtKB-KW"/>
</dbReference>
<dbReference type="GO" id="GO:0071479">
    <property type="term" value="P:cellular response to ionizing radiation"/>
    <property type="evidence" value="ECO:0000266"/>
    <property type="project" value="RGD"/>
</dbReference>
<dbReference type="GO" id="GO:0006338">
    <property type="term" value="P:chromatin remodeling"/>
    <property type="evidence" value="ECO:0000318"/>
    <property type="project" value="GO_Central"/>
</dbReference>
<dbReference type="GO" id="GO:0006974">
    <property type="term" value="P:DNA damage response"/>
    <property type="evidence" value="ECO:0000266"/>
    <property type="project" value="RGD"/>
</dbReference>
<dbReference type="GO" id="GO:0000724">
    <property type="term" value="P:double-strand break repair via homologous recombination"/>
    <property type="evidence" value="ECO:0000266"/>
    <property type="project" value="RGD"/>
</dbReference>
<dbReference type="GO" id="GO:0006954">
    <property type="term" value="P:inflammatory response"/>
    <property type="evidence" value="ECO:0000266"/>
    <property type="project" value="RGD"/>
</dbReference>
<dbReference type="GO" id="GO:2001034">
    <property type="term" value="P:positive regulation of double-strand break repair via nonhomologous end joining"/>
    <property type="evidence" value="ECO:0000266"/>
    <property type="project" value="RGD"/>
</dbReference>
<dbReference type="GO" id="GO:0010468">
    <property type="term" value="P:regulation of gene expression"/>
    <property type="evidence" value="ECO:0000318"/>
    <property type="project" value="GO_Central"/>
</dbReference>
<dbReference type="FunFam" id="2.60.120.650:FF:000003">
    <property type="entry name" value="Lysine-specific demethylase 4D"/>
    <property type="match status" value="1"/>
</dbReference>
<dbReference type="Gene3D" id="2.60.120.650">
    <property type="entry name" value="Cupin"/>
    <property type="match status" value="1"/>
</dbReference>
<dbReference type="InterPro" id="IPR003347">
    <property type="entry name" value="JmjC_dom"/>
</dbReference>
<dbReference type="InterPro" id="IPR003349">
    <property type="entry name" value="JmjN"/>
</dbReference>
<dbReference type="PANTHER" id="PTHR10694">
    <property type="entry name" value="LYSINE-SPECIFIC DEMETHYLASE"/>
    <property type="match status" value="1"/>
</dbReference>
<dbReference type="PANTHER" id="PTHR10694:SF21">
    <property type="entry name" value="LYSINE-SPECIFIC DEMETHYLASE 4D"/>
    <property type="match status" value="1"/>
</dbReference>
<dbReference type="Pfam" id="PF02373">
    <property type="entry name" value="JmjC"/>
    <property type="match status" value="1"/>
</dbReference>
<dbReference type="Pfam" id="PF02375">
    <property type="entry name" value="JmjN"/>
    <property type="match status" value="1"/>
</dbReference>
<dbReference type="SMART" id="SM00558">
    <property type="entry name" value="JmjC"/>
    <property type="match status" value="1"/>
</dbReference>
<dbReference type="SMART" id="SM00545">
    <property type="entry name" value="JmjN"/>
    <property type="match status" value="1"/>
</dbReference>
<dbReference type="SUPFAM" id="SSF51197">
    <property type="entry name" value="Clavaminate synthase-like"/>
    <property type="match status" value="1"/>
</dbReference>
<dbReference type="PROSITE" id="PS51184">
    <property type="entry name" value="JMJC"/>
    <property type="match status" value="1"/>
</dbReference>
<dbReference type="PROSITE" id="PS51183">
    <property type="entry name" value="JMJN"/>
    <property type="match status" value="1"/>
</dbReference>
<organism>
    <name type="scientific">Rattus norvegicus</name>
    <name type="common">Rat</name>
    <dbReference type="NCBI Taxonomy" id="10116"/>
    <lineage>
        <taxon>Eukaryota</taxon>
        <taxon>Metazoa</taxon>
        <taxon>Chordata</taxon>
        <taxon>Craniata</taxon>
        <taxon>Vertebrata</taxon>
        <taxon>Euteleostomi</taxon>
        <taxon>Mammalia</taxon>
        <taxon>Eutheria</taxon>
        <taxon>Euarchontoglires</taxon>
        <taxon>Glires</taxon>
        <taxon>Rodentia</taxon>
        <taxon>Myomorpha</taxon>
        <taxon>Muroidea</taxon>
        <taxon>Muridae</taxon>
        <taxon>Murinae</taxon>
        <taxon>Rattus</taxon>
    </lineage>
</organism>
<feature type="chain" id="PRO_0000376824" description="Lysine-specific demethylase 4D">
    <location>
        <begin position="1"/>
        <end position="510"/>
    </location>
</feature>
<feature type="domain" description="JmjN" evidence="4">
    <location>
        <begin position="15"/>
        <end position="57"/>
    </location>
</feature>
<feature type="domain" description="JmjC" evidence="5">
    <location>
        <begin position="143"/>
        <end position="309"/>
    </location>
</feature>
<feature type="region of interest" description="Disordered" evidence="6">
    <location>
        <begin position="397"/>
        <end position="510"/>
    </location>
</feature>
<feature type="compositionally biased region" description="Basic and acidic residues" evidence="6">
    <location>
        <begin position="461"/>
        <end position="471"/>
    </location>
</feature>
<feature type="binding site" evidence="2">
    <location>
        <position position="133"/>
    </location>
    <ligand>
        <name>2-oxoglutarate</name>
        <dbReference type="ChEBI" id="CHEBI:16810"/>
    </ligand>
</feature>
<feature type="binding site" evidence="5">
    <location>
        <position position="189"/>
    </location>
    <ligand>
        <name>Fe cation</name>
        <dbReference type="ChEBI" id="CHEBI:24875"/>
        <note>catalytic</note>
    </ligand>
</feature>
<feature type="binding site" evidence="5">
    <location>
        <position position="191"/>
    </location>
    <ligand>
        <name>Fe cation</name>
        <dbReference type="ChEBI" id="CHEBI:24875"/>
        <note>catalytic</note>
    </ligand>
</feature>
<feature type="binding site" evidence="2">
    <location>
        <position position="199"/>
    </location>
    <ligand>
        <name>2-oxoglutarate</name>
        <dbReference type="ChEBI" id="CHEBI:16810"/>
    </ligand>
</feature>
<feature type="binding site" evidence="2">
    <location>
        <position position="207"/>
    </location>
    <ligand>
        <name>2-oxoglutarate</name>
        <dbReference type="ChEBI" id="CHEBI:16810"/>
    </ligand>
</feature>
<feature type="binding site" evidence="3">
    <location>
        <position position="235"/>
    </location>
    <ligand>
        <name>Zn(2+)</name>
        <dbReference type="ChEBI" id="CHEBI:29105"/>
    </ligand>
</feature>
<feature type="binding site" evidence="3">
    <location>
        <position position="241"/>
    </location>
    <ligand>
        <name>Zn(2+)</name>
        <dbReference type="ChEBI" id="CHEBI:29105"/>
    </ligand>
</feature>
<feature type="binding site" evidence="2">
    <location>
        <position position="242"/>
    </location>
    <ligand>
        <name>2-oxoglutarate</name>
        <dbReference type="ChEBI" id="CHEBI:16810"/>
    </ligand>
</feature>
<feature type="binding site" evidence="5">
    <location>
        <position position="277"/>
    </location>
    <ligand>
        <name>Fe cation</name>
        <dbReference type="ChEBI" id="CHEBI:24875"/>
        <note>catalytic</note>
    </ligand>
</feature>
<feature type="binding site" evidence="3">
    <location>
        <position position="307"/>
    </location>
    <ligand>
        <name>Zn(2+)</name>
        <dbReference type="ChEBI" id="CHEBI:29105"/>
    </ligand>
</feature>
<feature type="binding site" evidence="3">
    <location>
        <position position="309"/>
    </location>
    <ligand>
        <name>Zn(2+)</name>
        <dbReference type="ChEBI" id="CHEBI:29105"/>
    </ligand>
</feature>
<feature type="modified residue" description="PolyADP-ribosyl glutamic acid" evidence="1">
    <location>
        <position position="23"/>
    </location>
</feature>
<feature type="modified residue" description="PolyADP-ribosyl glutamic acid" evidence="1">
    <location>
        <position position="24"/>
    </location>
</feature>
<proteinExistence type="evidence at transcript level"/>
<accession>A1A5Q5</accession>
<name>KDM4D_RAT</name>
<keyword id="KW-0013">ADP-ribosylation</keyword>
<keyword id="KW-0156">Chromatin regulator</keyword>
<keyword id="KW-0223">Dioxygenase</keyword>
<keyword id="KW-0408">Iron</keyword>
<keyword id="KW-0479">Metal-binding</keyword>
<keyword id="KW-0539">Nucleus</keyword>
<keyword id="KW-0560">Oxidoreductase</keyword>
<keyword id="KW-1185">Reference proteome</keyword>
<keyword id="KW-0804">Transcription</keyword>
<keyword id="KW-0805">Transcription regulation</keyword>
<keyword id="KW-0832">Ubl conjugation</keyword>
<keyword id="KW-0862">Zinc</keyword>
<sequence>MKTKSTCAQNPNCSIMIFRPTKEEFNDFDKYIAYMESQGAHRAGLAKVIPPKEWRARQSYDNISNILIATPLQQVVSGQAGVFTQYHKKKKAMTVGQYRHLANSKKYQTPPHLDFEDLERKYWKNRLYESPIYGADVSGSLFDGKTQQWNVGHLGTIQDLLEQECGIVIEGVNTPYLYFGMWKTSFAWHTEDMDLYSINYLHFGQPKTWYAVPPEHGRRLELLAKELFPGSSQGCQAFLRHKVALISPTVLKENGIPFGRITQEAGEFMVTFPYGYHAGFNHGFNCAEAINFATPRWIDYGKVASQCSCGEARVSFSMDAFVRILQPERYEMWKRGQDQAVVDHTEAMGPTSQELTTWRVIQAPRKTWGLKHLRLRQVSRCLLPVATDSNIANNTQMCHTSRQAADSKGDEVQESDPAIAPPYPLGLSSPGHMSTGKRGLGRRPCELGVQESTNGAPVKRRLPEGRDDRSPSPELQSQSVTGDLIVNSDLVNPGPQHPVTASEGGLTSDP</sequence>
<evidence type="ECO:0000250" key="1"/>
<evidence type="ECO:0000250" key="2">
    <source>
        <dbReference type="UniProtKB" id="B2RXH2"/>
    </source>
</evidence>
<evidence type="ECO:0000250" key="3">
    <source>
        <dbReference type="UniProtKB" id="Q6B0I6"/>
    </source>
</evidence>
<evidence type="ECO:0000255" key="4">
    <source>
        <dbReference type="PROSITE-ProRule" id="PRU00537"/>
    </source>
</evidence>
<evidence type="ECO:0000255" key="5">
    <source>
        <dbReference type="PROSITE-ProRule" id="PRU00538"/>
    </source>
</evidence>
<evidence type="ECO:0000256" key="6">
    <source>
        <dbReference type="SAM" id="MobiDB-lite"/>
    </source>
</evidence>
<evidence type="ECO:0000305" key="7"/>
<comment type="function">
    <text evidence="3">Histone demethylase that specifically demethylates 'Lys-9' of histone H3, thereby playing a central role in histone code. Does not demethylate histone H3 'Lys-4', H3 'Lys-27', H3 'Lys-36' nor H4 'Lys-20'. Demethylates both di- and trimethylated H3 'Lys-9' residue, while it has no activity on monomethylated residues. Demethylation of Lys residue generates formaldehyde and succinate.</text>
</comment>
<comment type="catalytic activity">
    <reaction evidence="3">
        <text>N(6),N(6),N(6)-trimethyl-L-lysyl(9)-[histone H3] + 2 2-oxoglutarate + 2 O2 = N(6)-methyl-L-lysyl(9)-[histone H3] + 2 formaldehyde + 2 succinate + 2 CO2</text>
        <dbReference type="Rhea" id="RHEA:60200"/>
        <dbReference type="Rhea" id="RHEA-COMP:15538"/>
        <dbReference type="Rhea" id="RHEA-COMP:15542"/>
        <dbReference type="ChEBI" id="CHEBI:15379"/>
        <dbReference type="ChEBI" id="CHEBI:16526"/>
        <dbReference type="ChEBI" id="CHEBI:16810"/>
        <dbReference type="ChEBI" id="CHEBI:16842"/>
        <dbReference type="ChEBI" id="CHEBI:30031"/>
        <dbReference type="ChEBI" id="CHEBI:61929"/>
        <dbReference type="ChEBI" id="CHEBI:61961"/>
        <dbReference type="EC" id="1.14.11.66"/>
    </reaction>
</comment>
<comment type="cofactor">
    <cofactor evidence="1">
        <name>Fe(2+)</name>
        <dbReference type="ChEBI" id="CHEBI:29033"/>
    </cofactor>
    <text evidence="1">Binds 1 Fe(2+) ion per subunit.</text>
</comment>
<comment type="subcellular location">
    <subcellularLocation>
        <location evidence="4">Nucleus</location>
    </subcellularLocation>
</comment>
<comment type="PTM">
    <text evidence="3">Ubiquitinated via 'Lys-63'-linked ubiquitin chains. Deubiquitinated by USP14 with the help of TRIM14 leading to stabilization.</text>
</comment>
<comment type="similarity">
    <text evidence="7">Belongs to the JHDM3 histone demethylase family.</text>
</comment>
<reference key="1">
    <citation type="journal article" date="2004" name="Genome Res.">
        <title>The status, quality, and expansion of the NIH full-length cDNA project: the Mammalian Gene Collection (MGC).</title>
        <authorList>
            <consortium name="The MGC Project Team"/>
        </authorList>
    </citation>
    <scope>NUCLEOTIDE SEQUENCE [LARGE SCALE MRNA]</scope>
    <source>
        <tissue>Testis</tissue>
    </source>
</reference>